<protein>
    <recommendedName>
        <fullName>Retinal homeobox protein Rx1</fullName>
        <shortName>cRax1</shortName>
    </recommendedName>
</protein>
<name>RX1_CHICK</name>
<proteinExistence type="evidence at transcript level"/>
<evidence type="ECO:0000250" key="1"/>
<evidence type="ECO:0000255" key="2"/>
<evidence type="ECO:0000255" key="3">
    <source>
        <dbReference type="PROSITE-ProRule" id="PRU00108"/>
    </source>
</evidence>
<evidence type="ECO:0000255" key="4">
    <source>
        <dbReference type="PROSITE-ProRule" id="PRU00138"/>
    </source>
</evidence>
<evidence type="ECO:0000256" key="5">
    <source>
        <dbReference type="SAM" id="MobiDB-lite"/>
    </source>
</evidence>
<evidence type="ECO:0000305" key="6"/>
<feature type="chain" id="PRO_0000049280" description="Retinal homeobox protein Rx1">
    <location>
        <begin position="1"/>
        <end position="228"/>
    </location>
</feature>
<feature type="DNA-binding region" description="Homeobox" evidence="3">
    <location>
        <begin position="36"/>
        <end position="95"/>
    </location>
</feature>
<feature type="region of interest" description="Disordered" evidence="5">
    <location>
        <begin position="1"/>
        <end position="41"/>
    </location>
</feature>
<feature type="short sequence motif" description="OAR" evidence="4">
    <location>
        <begin position="205"/>
        <end position="218"/>
    </location>
</feature>
<feature type="short sequence motif" description="Nuclear localization signal" evidence="2">
    <location>
        <begin position="211"/>
        <end position="215"/>
    </location>
</feature>
<feature type="compositionally biased region" description="Basic and acidic residues" evidence="5">
    <location>
        <begin position="1"/>
        <end position="18"/>
    </location>
</feature>
<sequence>MFLNKCEGDLGELRKPGDSEGTPPAAAEEEQPKKKHRRNRTTFTTYQLHELERAFEKSHYPDVYSREELAMKVNLPEVRVQVWFQNRRAKWRRQEKMEASSMKLHDTPMLSFNRPPMTANVGPMSNSLPLDPWLTSPISSATPVHSIPGFMGAPQALQPPYGGHSFLNTPPGMAQGMQPMAPAPYQCGTPFVDKYPLEDVDQRSSSIASLRMKAKEHIQTIDKTWQPI</sequence>
<reference key="1">
    <citation type="journal article" date="1999" name="Mech. Dev.">
        <title>Identification of chick rax/rx genes with overlapping patterns of expression during early eye and brain development.</title>
        <authorList>
            <person name="Ohuchi H."/>
            <person name="Tomonari S."/>
            <person name="Itoh H."/>
            <person name="Mikawa T."/>
            <person name="Noji S."/>
        </authorList>
    </citation>
    <scope>NUCLEOTIDE SEQUENCE [MRNA]</scope>
</reference>
<reference key="2">
    <citation type="journal article" date="2002" name="Development">
        <title>The chicken RaxL gene plays a role in the initiation of photoreceptor differentiation.</title>
        <authorList>
            <person name="Chen C.-M.A."/>
            <person name="Cepko C.L."/>
        </authorList>
    </citation>
    <scope>NUCLEOTIDE SEQUENCE [MRNA]</scope>
</reference>
<comment type="function">
    <text evidence="1">Plays a critical role in eye formation by regulating the initial specification of retinal cells and/or their subsequent proliferation.</text>
</comment>
<comment type="subcellular location">
    <subcellularLocation>
        <location evidence="3 4">Nucleus</location>
    </subcellularLocation>
</comment>
<comment type="similarity">
    <text evidence="6">Belongs to the paired homeobox family. Bicoid subfamily.</text>
</comment>
<keyword id="KW-0217">Developmental protein</keyword>
<keyword id="KW-0238">DNA-binding</keyword>
<keyword id="KW-0371">Homeobox</keyword>
<keyword id="KW-0539">Nucleus</keyword>
<keyword id="KW-1185">Reference proteome</keyword>
<keyword id="KW-0804">Transcription</keyword>
<keyword id="KW-0805">Transcription regulation</keyword>
<dbReference type="EMBL" id="AB015750">
    <property type="protein sequence ID" value="BAA84748.1"/>
    <property type="molecule type" value="mRNA"/>
</dbReference>
<dbReference type="EMBL" id="AF420601">
    <property type="protein sequence ID" value="AAN32719.1"/>
    <property type="molecule type" value="mRNA"/>
</dbReference>
<dbReference type="RefSeq" id="NP_989435.2">
    <property type="nucleotide sequence ID" value="NM_204104.2"/>
</dbReference>
<dbReference type="SMR" id="Q9PVY0"/>
<dbReference type="FunCoup" id="Q9PVY0">
    <property type="interactions" value="9"/>
</dbReference>
<dbReference type="STRING" id="9031.ENSGALP00000031663"/>
<dbReference type="PaxDb" id="9031-ENSGALP00000031663"/>
<dbReference type="Ensembl" id="ENSGALT00010068071.1">
    <property type="protein sequence ID" value="ENSGALP00010041814.1"/>
    <property type="gene ID" value="ENSGALG00010028092.1"/>
</dbReference>
<dbReference type="GeneID" id="373893"/>
<dbReference type="KEGG" id="gga:373893"/>
<dbReference type="CTD" id="84839"/>
<dbReference type="VEuPathDB" id="HostDB:geneid_373893"/>
<dbReference type="eggNOG" id="KOG0490">
    <property type="taxonomic scope" value="Eukaryota"/>
</dbReference>
<dbReference type="GeneTree" id="ENSGT00940000163917"/>
<dbReference type="HOGENOM" id="CLU_047013_2_0_1"/>
<dbReference type="InParanoid" id="Q9PVY0"/>
<dbReference type="OMA" id="MAPTPYQ"/>
<dbReference type="OrthoDB" id="6159439at2759"/>
<dbReference type="PhylomeDB" id="Q9PVY0"/>
<dbReference type="PRO" id="PR:Q9PVY0"/>
<dbReference type="Proteomes" id="UP000000539">
    <property type="component" value="Chromosome 28"/>
</dbReference>
<dbReference type="Bgee" id="ENSGALG00000013431">
    <property type="expression patterns" value="Expressed in granulocyte and 3 other cell types or tissues"/>
</dbReference>
<dbReference type="GO" id="GO:0005634">
    <property type="term" value="C:nucleus"/>
    <property type="evidence" value="ECO:0007669"/>
    <property type="project" value="UniProtKB-SubCell"/>
</dbReference>
<dbReference type="GO" id="GO:0000981">
    <property type="term" value="F:DNA-binding transcription factor activity, RNA polymerase II-specific"/>
    <property type="evidence" value="ECO:0000318"/>
    <property type="project" value="GO_Central"/>
</dbReference>
<dbReference type="GO" id="GO:0000978">
    <property type="term" value="F:RNA polymerase II cis-regulatory region sequence-specific DNA binding"/>
    <property type="evidence" value="ECO:0000318"/>
    <property type="project" value="GO_Central"/>
</dbReference>
<dbReference type="GO" id="GO:0045944">
    <property type="term" value="P:positive regulation of transcription by RNA polymerase II"/>
    <property type="evidence" value="ECO:0007669"/>
    <property type="project" value="InterPro"/>
</dbReference>
<dbReference type="GO" id="GO:0006357">
    <property type="term" value="P:regulation of transcription by RNA polymerase II"/>
    <property type="evidence" value="ECO:0000318"/>
    <property type="project" value="GO_Central"/>
</dbReference>
<dbReference type="CDD" id="cd00086">
    <property type="entry name" value="homeodomain"/>
    <property type="match status" value="1"/>
</dbReference>
<dbReference type="FunFam" id="1.10.10.60:FF:000071">
    <property type="entry name" value="Retinal homeobox gene 2"/>
    <property type="match status" value="1"/>
</dbReference>
<dbReference type="Gene3D" id="1.10.10.60">
    <property type="entry name" value="Homeodomain-like"/>
    <property type="match status" value="1"/>
</dbReference>
<dbReference type="InterPro" id="IPR001356">
    <property type="entry name" value="HD"/>
</dbReference>
<dbReference type="InterPro" id="IPR017970">
    <property type="entry name" value="Homeobox_CS"/>
</dbReference>
<dbReference type="InterPro" id="IPR009057">
    <property type="entry name" value="Homeodomain-like_sf"/>
</dbReference>
<dbReference type="InterPro" id="IPR003654">
    <property type="entry name" value="OAR_dom"/>
</dbReference>
<dbReference type="InterPro" id="IPR043562">
    <property type="entry name" value="RAX/RAX2"/>
</dbReference>
<dbReference type="PANTHER" id="PTHR46271">
    <property type="entry name" value="HOMEOBOX PROTEIN, PUTATIVE-RELATED"/>
    <property type="match status" value="1"/>
</dbReference>
<dbReference type="PANTHER" id="PTHR46271:SF2">
    <property type="entry name" value="RETINA AND ANTERIOR NEURAL FOLD HOMEOBOX PROTEIN 2"/>
    <property type="match status" value="1"/>
</dbReference>
<dbReference type="Pfam" id="PF00046">
    <property type="entry name" value="Homeodomain"/>
    <property type="match status" value="1"/>
</dbReference>
<dbReference type="Pfam" id="PF03826">
    <property type="entry name" value="OAR"/>
    <property type="match status" value="1"/>
</dbReference>
<dbReference type="SMART" id="SM00389">
    <property type="entry name" value="HOX"/>
    <property type="match status" value="1"/>
</dbReference>
<dbReference type="SUPFAM" id="SSF46689">
    <property type="entry name" value="Homeodomain-like"/>
    <property type="match status" value="1"/>
</dbReference>
<dbReference type="PROSITE" id="PS00027">
    <property type="entry name" value="HOMEOBOX_1"/>
    <property type="match status" value="1"/>
</dbReference>
<dbReference type="PROSITE" id="PS50071">
    <property type="entry name" value="HOMEOBOX_2"/>
    <property type="match status" value="1"/>
</dbReference>
<dbReference type="PROSITE" id="PS50803">
    <property type="entry name" value="OAR"/>
    <property type="match status" value="1"/>
</dbReference>
<accession>Q9PVY0</accession>
<accession>Q547X8</accession>
<gene>
    <name type="primary">RX1</name>
    <name type="synonym">RAX1</name>
</gene>
<organism>
    <name type="scientific">Gallus gallus</name>
    <name type="common">Chicken</name>
    <dbReference type="NCBI Taxonomy" id="9031"/>
    <lineage>
        <taxon>Eukaryota</taxon>
        <taxon>Metazoa</taxon>
        <taxon>Chordata</taxon>
        <taxon>Craniata</taxon>
        <taxon>Vertebrata</taxon>
        <taxon>Euteleostomi</taxon>
        <taxon>Archelosauria</taxon>
        <taxon>Archosauria</taxon>
        <taxon>Dinosauria</taxon>
        <taxon>Saurischia</taxon>
        <taxon>Theropoda</taxon>
        <taxon>Coelurosauria</taxon>
        <taxon>Aves</taxon>
        <taxon>Neognathae</taxon>
        <taxon>Galloanserae</taxon>
        <taxon>Galliformes</taxon>
        <taxon>Phasianidae</taxon>
        <taxon>Phasianinae</taxon>
        <taxon>Gallus</taxon>
    </lineage>
</organism>